<dbReference type="EC" id="4.2.1.11" evidence="1"/>
<dbReference type="EMBL" id="CP000927">
    <property type="protein sequence ID" value="ABZ71889.1"/>
    <property type="molecule type" value="Genomic_DNA"/>
</dbReference>
<dbReference type="SMR" id="B0SYX8"/>
<dbReference type="STRING" id="366602.Caul_2762"/>
<dbReference type="KEGG" id="cak:Caul_2762"/>
<dbReference type="eggNOG" id="COG0148">
    <property type="taxonomic scope" value="Bacteria"/>
</dbReference>
<dbReference type="HOGENOM" id="CLU_031223_2_1_5"/>
<dbReference type="OrthoDB" id="9804716at2"/>
<dbReference type="UniPathway" id="UPA00109">
    <property type="reaction ID" value="UER00187"/>
</dbReference>
<dbReference type="GO" id="GO:0009986">
    <property type="term" value="C:cell surface"/>
    <property type="evidence" value="ECO:0007669"/>
    <property type="project" value="UniProtKB-SubCell"/>
</dbReference>
<dbReference type="GO" id="GO:0005576">
    <property type="term" value="C:extracellular region"/>
    <property type="evidence" value="ECO:0007669"/>
    <property type="project" value="UniProtKB-SubCell"/>
</dbReference>
<dbReference type="GO" id="GO:0000015">
    <property type="term" value="C:phosphopyruvate hydratase complex"/>
    <property type="evidence" value="ECO:0007669"/>
    <property type="project" value="InterPro"/>
</dbReference>
<dbReference type="GO" id="GO:0000287">
    <property type="term" value="F:magnesium ion binding"/>
    <property type="evidence" value="ECO:0007669"/>
    <property type="project" value="UniProtKB-UniRule"/>
</dbReference>
<dbReference type="GO" id="GO:0004634">
    <property type="term" value="F:phosphopyruvate hydratase activity"/>
    <property type="evidence" value="ECO:0007669"/>
    <property type="project" value="UniProtKB-UniRule"/>
</dbReference>
<dbReference type="GO" id="GO:0006096">
    <property type="term" value="P:glycolytic process"/>
    <property type="evidence" value="ECO:0007669"/>
    <property type="project" value="UniProtKB-UniRule"/>
</dbReference>
<dbReference type="CDD" id="cd03313">
    <property type="entry name" value="enolase"/>
    <property type="match status" value="1"/>
</dbReference>
<dbReference type="FunFam" id="3.20.20.120:FF:000001">
    <property type="entry name" value="Enolase"/>
    <property type="match status" value="1"/>
</dbReference>
<dbReference type="FunFam" id="3.30.390.10:FF:000001">
    <property type="entry name" value="Enolase"/>
    <property type="match status" value="1"/>
</dbReference>
<dbReference type="Gene3D" id="3.20.20.120">
    <property type="entry name" value="Enolase-like C-terminal domain"/>
    <property type="match status" value="1"/>
</dbReference>
<dbReference type="Gene3D" id="3.30.390.10">
    <property type="entry name" value="Enolase-like, N-terminal domain"/>
    <property type="match status" value="1"/>
</dbReference>
<dbReference type="HAMAP" id="MF_00318">
    <property type="entry name" value="Enolase"/>
    <property type="match status" value="1"/>
</dbReference>
<dbReference type="InterPro" id="IPR000941">
    <property type="entry name" value="Enolase"/>
</dbReference>
<dbReference type="InterPro" id="IPR036849">
    <property type="entry name" value="Enolase-like_C_sf"/>
</dbReference>
<dbReference type="InterPro" id="IPR029017">
    <property type="entry name" value="Enolase-like_N"/>
</dbReference>
<dbReference type="InterPro" id="IPR020810">
    <property type="entry name" value="Enolase_C"/>
</dbReference>
<dbReference type="InterPro" id="IPR020809">
    <property type="entry name" value="Enolase_CS"/>
</dbReference>
<dbReference type="InterPro" id="IPR020811">
    <property type="entry name" value="Enolase_N"/>
</dbReference>
<dbReference type="NCBIfam" id="TIGR01060">
    <property type="entry name" value="eno"/>
    <property type="match status" value="1"/>
</dbReference>
<dbReference type="PANTHER" id="PTHR11902">
    <property type="entry name" value="ENOLASE"/>
    <property type="match status" value="1"/>
</dbReference>
<dbReference type="PANTHER" id="PTHR11902:SF1">
    <property type="entry name" value="ENOLASE"/>
    <property type="match status" value="1"/>
</dbReference>
<dbReference type="Pfam" id="PF00113">
    <property type="entry name" value="Enolase_C"/>
    <property type="match status" value="1"/>
</dbReference>
<dbReference type="Pfam" id="PF03952">
    <property type="entry name" value="Enolase_N"/>
    <property type="match status" value="1"/>
</dbReference>
<dbReference type="PIRSF" id="PIRSF001400">
    <property type="entry name" value="Enolase"/>
    <property type="match status" value="1"/>
</dbReference>
<dbReference type="PRINTS" id="PR00148">
    <property type="entry name" value="ENOLASE"/>
</dbReference>
<dbReference type="SFLD" id="SFLDF00002">
    <property type="entry name" value="enolase"/>
    <property type="match status" value="1"/>
</dbReference>
<dbReference type="SFLD" id="SFLDG00178">
    <property type="entry name" value="enolase"/>
    <property type="match status" value="1"/>
</dbReference>
<dbReference type="SMART" id="SM01192">
    <property type="entry name" value="Enolase_C"/>
    <property type="match status" value="1"/>
</dbReference>
<dbReference type="SMART" id="SM01193">
    <property type="entry name" value="Enolase_N"/>
    <property type="match status" value="1"/>
</dbReference>
<dbReference type="SUPFAM" id="SSF51604">
    <property type="entry name" value="Enolase C-terminal domain-like"/>
    <property type="match status" value="1"/>
</dbReference>
<dbReference type="SUPFAM" id="SSF54826">
    <property type="entry name" value="Enolase N-terminal domain-like"/>
    <property type="match status" value="1"/>
</dbReference>
<dbReference type="PROSITE" id="PS00164">
    <property type="entry name" value="ENOLASE"/>
    <property type="match status" value="1"/>
</dbReference>
<sequence length="426" mass="44950">MTEIVDIIAREILDSRGNPTVEVDVVLEDGAFGRAAVPSGASTGAHEAVEKRDGDKSRYGGKGVKSAVDAVNGELFDALSGVDAEDQRRIDNLMIALDGTPNKSRLGANAILGVSLAVAKAAAESAGLPLYKYVGGVSARVLPVPMMNIINGGAHADNPIDIQEFMILPTGSPTFAEALRMGAEIFHGLKKALKDAGHNTNVGDEGGFAPNLGSAEDALAFIVKAGEAAGYKSGEDFVLGLDVAATEFFKNGKYELEGEGKSLDPAQMVDYLAGLADKFPILSIEDGMSEDDFDGWKLLTDKLGKKVQLVGDDLFVTNPKRLQIGLDKGLANSILIKVNQIGTLSETIDAVDMAHRAAYTSVMSHRSGETEDSTIADLAVALNCGQIKTGSLARSDRLAKYNQLLRIEEALDDQAVYAGRAVLKGR</sequence>
<evidence type="ECO:0000255" key="1">
    <source>
        <dbReference type="HAMAP-Rule" id="MF_00318"/>
    </source>
</evidence>
<evidence type="ECO:0000256" key="2">
    <source>
        <dbReference type="SAM" id="MobiDB-lite"/>
    </source>
</evidence>
<name>ENO_CAUSK</name>
<proteinExistence type="inferred from homology"/>
<comment type="function">
    <text evidence="1">Catalyzes the reversible conversion of 2-phosphoglycerate (2-PG) into phosphoenolpyruvate (PEP). It is essential for the degradation of carbohydrates via glycolysis.</text>
</comment>
<comment type="catalytic activity">
    <reaction evidence="1">
        <text>(2R)-2-phosphoglycerate = phosphoenolpyruvate + H2O</text>
        <dbReference type="Rhea" id="RHEA:10164"/>
        <dbReference type="ChEBI" id="CHEBI:15377"/>
        <dbReference type="ChEBI" id="CHEBI:58289"/>
        <dbReference type="ChEBI" id="CHEBI:58702"/>
        <dbReference type="EC" id="4.2.1.11"/>
    </reaction>
</comment>
<comment type="cofactor">
    <cofactor evidence="1">
        <name>Mg(2+)</name>
        <dbReference type="ChEBI" id="CHEBI:18420"/>
    </cofactor>
    <text evidence="1">Binds a second Mg(2+) ion via substrate during catalysis.</text>
</comment>
<comment type="pathway">
    <text evidence="1">Carbohydrate degradation; glycolysis; pyruvate from D-glyceraldehyde 3-phosphate: step 4/5.</text>
</comment>
<comment type="subcellular location">
    <subcellularLocation>
        <location evidence="1">Cytoplasm</location>
    </subcellularLocation>
    <subcellularLocation>
        <location evidence="1">Secreted</location>
    </subcellularLocation>
    <subcellularLocation>
        <location evidence="1">Cell surface</location>
    </subcellularLocation>
    <text evidence="1">Fractions of enolase are present in both the cytoplasm and on the cell surface.</text>
</comment>
<comment type="similarity">
    <text evidence="1">Belongs to the enolase family.</text>
</comment>
<feature type="chain" id="PRO_1000079125" description="Enolase">
    <location>
        <begin position="1"/>
        <end position="426"/>
    </location>
</feature>
<feature type="region of interest" description="Disordered" evidence="2">
    <location>
        <begin position="38"/>
        <end position="60"/>
    </location>
</feature>
<feature type="compositionally biased region" description="Basic and acidic residues" evidence="2">
    <location>
        <begin position="47"/>
        <end position="58"/>
    </location>
</feature>
<feature type="active site" description="Proton donor" evidence="1">
    <location>
        <position position="205"/>
    </location>
</feature>
<feature type="active site" description="Proton acceptor" evidence="1">
    <location>
        <position position="337"/>
    </location>
</feature>
<feature type="binding site" evidence="1">
    <location>
        <position position="163"/>
    </location>
    <ligand>
        <name>(2R)-2-phosphoglycerate</name>
        <dbReference type="ChEBI" id="CHEBI:58289"/>
    </ligand>
</feature>
<feature type="binding site" evidence="1">
    <location>
        <position position="242"/>
    </location>
    <ligand>
        <name>Mg(2+)</name>
        <dbReference type="ChEBI" id="CHEBI:18420"/>
    </ligand>
</feature>
<feature type="binding site" evidence="1">
    <location>
        <position position="285"/>
    </location>
    <ligand>
        <name>Mg(2+)</name>
        <dbReference type="ChEBI" id="CHEBI:18420"/>
    </ligand>
</feature>
<feature type="binding site" evidence="1">
    <location>
        <position position="312"/>
    </location>
    <ligand>
        <name>Mg(2+)</name>
        <dbReference type="ChEBI" id="CHEBI:18420"/>
    </ligand>
</feature>
<feature type="binding site" evidence="1">
    <location>
        <position position="337"/>
    </location>
    <ligand>
        <name>(2R)-2-phosphoglycerate</name>
        <dbReference type="ChEBI" id="CHEBI:58289"/>
    </ligand>
</feature>
<feature type="binding site" evidence="1">
    <location>
        <position position="366"/>
    </location>
    <ligand>
        <name>(2R)-2-phosphoglycerate</name>
        <dbReference type="ChEBI" id="CHEBI:58289"/>
    </ligand>
</feature>
<feature type="binding site" evidence="1">
    <location>
        <position position="367"/>
    </location>
    <ligand>
        <name>(2R)-2-phosphoglycerate</name>
        <dbReference type="ChEBI" id="CHEBI:58289"/>
    </ligand>
</feature>
<feature type="binding site" evidence="1">
    <location>
        <position position="388"/>
    </location>
    <ligand>
        <name>(2R)-2-phosphoglycerate</name>
        <dbReference type="ChEBI" id="CHEBI:58289"/>
    </ligand>
</feature>
<organism>
    <name type="scientific">Caulobacter sp. (strain K31)</name>
    <dbReference type="NCBI Taxonomy" id="366602"/>
    <lineage>
        <taxon>Bacteria</taxon>
        <taxon>Pseudomonadati</taxon>
        <taxon>Pseudomonadota</taxon>
        <taxon>Alphaproteobacteria</taxon>
        <taxon>Caulobacterales</taxon>
        <taxon>Caulobacteraceae</taxon>
        <taxon>Caulobacter</taxon>
    </lineage>
</organism>
<protein>
    <recommendedName>
        <fullName evidence="1">Enolase</fullName>
        <ecNumber evidence="1">4.2.1.11</ecNumber>
    </recommendedName>
    <alternativeName>
        <fullName evidence="1">2-phospho-D-glycerate hydro-lyase</fullName>
    </alternativeName>
    <alternativeName>
        <fullName evidence="1">2-phosphoglycerate dehydratase</fullName>
    </alternativeName>
</protein>
<keyword id="KW-0963">Cytoplasm</keyword>
<keyword id="KW-0324">Glycolysis</keyword>
<keyword id="KW-0456">Lyase</keyword>
<keyword id="KW-0460">Magnesium</keyword>
<keyword id="KW-0479">Metal-binding</keyword>
<keyword id="KW-0964">Secreted</keyword>
<gene>
    <name evidence="1" type="primary">eno</name>
    <name type="ordered locus">Caul_2762</name>
</gene>
<accession>B0SYX8</accession>
<reference key="1">
    <citation type="submission" date="2008-01" db="EMBL/GenBank/DDBJ databases">
        <title>Complete sequence of chromosome of Caulobacter sp. K31.</title>
        <authorList>
            <consortium name="US DOE Joint Genome Institute"/>
            <person name="Copeland A."/>
            <person name="Lucas S."/>
            <person name="Lapidus A."/>
            <person name="Barry K."/>
            <person name="Glavina del Rio T."/>
            <person name="Dalin E."/>
            <person name="Tice H."/>
            <person name="Pitluck S."/>
            <person name="Bruce D."/>
            <person name="Goodwin L."/>
            <person name="Thompson L.S."/>
            <person name="Brettin T."/>
            <person name="Detter J.C."/>
            <person name="Han C."/>
            <person name="Schmutz J."/>
            <person name="Larimer F."/>
            <person name="Land M."/>
            <person name="Hauser L."/>
            <person name="Kyrpides N."/>
            <person name="Kim E."/>
            <person name="Stephens C."/>
            <person name="Richardson P."/>
        </authorList>
    </citation>
    <scope>NUCLEOTIDE SEQUENCE [LARGE SCALE GENOMIC DNA]</scope>
    <source>
        <strain>K31</strain>
    </source>
</reference>